<comment type="function">
    <text evidence="1">Cell wall formation.</text>
</comment>
<comment type="catalytic activity">
    <reaction evidence="1">
        <text>UDP-N-acetyl-alpha-D-muramate + L-alanine + ATP = UDP-N-acetyl-alpha-D-muramoyl-L-alanine + ADP + phosphate + H(+)</text>
        <dbReference type="Rhea" id="RHEA:23372"/>
        <dbReference type="ChEBI" id="CHEBI:15378"/>
        <dbReference type="ChEBI" id="CHEBI:30616"/>
        <dbReference type="ChEBI" id="CHEBI:43474"/>
        <dbReference type="ChEBI" id="CHEBI:57972"/>
        <dbReference type="ChEBI" id="CHEBI:70757"/>
        <dbReference type="ChEBI" id="CHEBI:83898"/>
        <dbReference type="ChEBI" id="CHEBI:456216"/>
        <dbReference type="EC" id="6.3.2.8"/>
    </reaction>
</comment>
<comment type="pathway">
    <text evidence="1">Cell wall biogenesis; peptidoglycan biosynthesis.</text>
</comment>
<comment type="subcellular location">
    <subcellularLocation>
        <location evidence="1">Cytoplasm</location>
    </subcellularLocation>
</comment>
<comment type="similarity">
    <text evidence="1">Belongs to the MurCDEF family.</text>
</comment>
<evidence type="ECO:0000255" key="1">
    <source>
        <dbReference type="HAMAP-Rule" id="MF_00046"/>
    </source>
</evidence>
<accession>A9H0J3</accession>
<accession>B5ZJU7</accession>
<name>MURC_GLUDA</name>
<dbReference type="EC" id="6.3.2.8" evidence="1"/>
<dbReference type="EMBL" id="AM889285">
    <property type="protein sequence ID" value="CAP57135.1"/>
    <property type="molecule type" value="Genomic_DNA"/>
</dbReference>
<dbReference type="EMBL" id="CP001189">
    <property type="protein sequence ID" value="ACI52899.1"/>
    <property type="molecule type" value="Genomic_DNA"/>
</dbReference>
<dbReference type="RefSeq" id="WP_012227602.1">
    <property type="nucleotide sequence ID" value="NC_010125.1"/>
</dbReference>
<dbReference type="SMR" id="A9H0J3"/>
<dbReference type="STRING" id="272568.GDI3192"/>
<dbReference type="KEGG" id="gdi:GDI3192"/>
<dbReference type="KEGG" id="gdj:Gdia_3169"/>
<dbReference type="eggNOG" id="COG0773">
    <property type="taxonomic scope" value="Bacteria"/>
</dbReference>
<dbReference type="HOGENOM" id="CLU_028104_2_2_5"/>
<dbReference type="OrthoDB" id="9804126at2"/>
<dbReference type="UniPathway" id="UPA00219"/>
<dbReference type="Proteomes" id="UP000001176">
    <property type="component" value="Chromosome"/>
</dbReference>
<dbReference type="GO" id="GO:0005737">
    <property type="term" value="C:cytoplasm"/>
    <property type="evidence" value="ECO:0007669"/>
    <property type="project" value="UniProtKB-SubCell"/>
</dbReference>
<dbReference type="GO" id="GO:0005524">
    <property type="term" value="F:ATP binding"/>
    <property type="evidence" value="ECO:0007669"/>
    <property type="project" value="UniProtKB-UniRule"/>
</dbReference>
<dbReference type="GO" id="GO:0008763">
    <property type="term" value="F:UDP-N-acetylmuramate-L-alanine ligase activity"/>
    <property type="evidence" value="ECO:0007669"/>
    <property type="project" value="UniProtKB-UniRule"/>
</dbReference>
<dbReference type="GO" id="GO:0051301">
    <property type="term" value="P:cell division"/>
    <property type="evidence" value="ECO:0007669"/>
    <property type="project" value="UniProtKB-KW"/>
</dbReference>
<dbReference type="GO" id="GO:0071555">
    <property type="term" value="P:cell wall organization"/>
    <property type="evidence" value="ECO:0007669"/>
    <property type="project" value="UniProtKB-KW"/>
</dbReference>
<dbReference type="GO" id="GO:0009252">
    <property type="term" value="P:peptidoglycan biosynthetic process"/>
    <property type="evidence" value="ECO:0007669"/>
    <property type="project" value="UniProtKB-UniRule"/>
</dbReference>
<dbReference type="GO" id="GO:0008360">
    <property type="term" value="P:regulation of cell shape"/>
    <property type="evidence" value="ECO:0007669"/>
    <property type="project" value="UniProtKB-KW"/>
</dbReference>
<dbReference type="Gene3D" id="3.90.190.20">
    <property type="entry name" value="Mur ligase, C-terminal domain"/>
    <property type="match status" value="1"/>
</dbReference>
<dbReference type="Gene3D" id="3.40.1190.10">
    <property type="entry name" value="Mur-like, catalytic domain"/>
    <property type="match status" value="1"/>
</dbReference>
<dbReference type="Gene3D" id="3.40.50.720">
    <property type="entry name" value="NAD(P)-binding Rossmann-like Domain"/>
    <property type="match status" value="1"/>
</dbReference>
<dbReference type="HAMAP" id="MF_00046">
    <property type="entry name" value="MurC"/>
    <property type="match status" value="1"/>
</dbReference>
<dbReference type="InterPro" id="IPR036565">
    <property type="entry name" value="Mur-like_cat_sf"/>
</dbReference>
<dbReference type="InterPro" id="IPR004101">
    <property type="entry name" value="Mur_ligase_C"/>
</dbReference>
<dbReference type="InterPro" id="IPR036615">
    <property type="entry name" value="Mur_ligase_C_dom_sf"/>
</dbReference>
<dbReference type="InterPro" id="IPR013221">
    <property type="entry name" value="Mur_ligase_cen"/>
</dbReference>
<dbReference type="InterPro" id="IPR000713">
    <property type="entry name" value="Mur_ligase_N"/>
</dbReference>
<dbReference type="InterPro" id="IPR050061">
    <property type="entry name" value="MurCDEF_pg_biosynth"/>
</dbReference>
<dbReference type="InterPro" id="IPR005758">
    <property type="entry name" value="UDP-N-AcMur_Ala_ligase_MurC"/>
</dbReference>
<dbReference type="NCBIfam" id="TIGR01082">
    <property type="entry name" value="murC"/>
    <property type="match status" value="1"/>
</dbReference>
<dbReference type="PANTHER" id="PTHR43445:SF3">
    <property type="entry name" value="UDP-N-ACETYLMURAMATE--L-ALANINE LIGASE"/>
    <property type="match status" value="1"/>
</dbReference>
<dbReference type="PANTHER" id="PTHR43445">
    <property type="entry name" value="UDP-N-ACETYLMURAMATE--L-ALANINE LIGASE-RELATED"/>
    <property type="match status" value="1"/>
</dbReference>
<dbReference type="Pfam" id="PF01225">
    <property type="entry name" value="Mur_ligase"/>
    <property type="match status" value="1"/>
</dbReference>
<dbReference type="Pfam" id="PF02875">
    <property type="entry name" value="Mur_ligase_C"/>
    <property type="match status" value="1"/>
</dbReference>
<dbReference type="Pfam" id="PF08245">
    <property type="entry name" value="Mur_ligase_M"/>
    <property type="match status" value="1"/>
</dbReference>
<dbReference type="SUPFAM" id="SSF51984">
    <property type="entry name" value="MurCD N-terminal domain"/>
    <property type="match status" value="1"/>
</dbReference>
<dbReference type="SUPFAM" id="SSF53623">
    <property type="entry name" value="MurD-like peptide ligases, catalytic domain"/>
    <property type="match status" value="1"/>
</dbReference>
<dbReference type="SUPFAM" id="SSF53244">
    <property type="entry name" value="MurD-like peptide ligases, peptide-binding domain"/>
    <property type="match status" value="1"/>
</dbReference>
<proteinExistence type="inferred from homology"/>
<sequence length="480" mass="51222">MRALPLSIGTIHFVGIGGIGMSGIAEVLHMLGYAVQGSDIAENANVQRLRAAGITVAIGHDAANLGAAQVVVTSTAVRRDNPEVVAARARLIPVVRRAEMLAELMRLRWAVAVGGTHGKTTTTSLIAAVLEAARLDPTVINGGIIEAYGTNTRMGSGDWMVVEADESDGSFLRLPSVITVVTNMDPEHLDHWGTAEAMQAAYDQFVSNIPFYGFAVLCIDHPAVQQMIPRLSDHRIVTYGFSPQADIRAEKVITDKLGATFEVVVTNRNRNRTRRAGPFRLPMLGHHNVQNALAAIAVGVEMDIDDATLRSAFAGFRGVKRRFTRTGETGGITVIDDYGHHPVEIAAVLKAARQAGARDVIAVVQPHRYSRLQTLFGEFCTCMNDAGTVIVADVYAAGEAPIPGVDRDALVEGLRERGHRSVVPLPDPEHLAEMVHAIARPGDFVVCLGAGSITNWAQALPGQLAALQNPAAARKGECAA</sequence>
<gene>
    <name evidence="1" type="primary">murC</name>
    <name type="ordered locus">GDI3192</name>
    <name type="ordered locus">Gdia_3169</name>
</gene>
<organism>
    <name type="scientific">Gluconacetobacter diazotrophicus (strain ATCC 49037 / DSM 5601 / CCUG 37298 / CIP 103539 / LMG 7603 / PAl5)</name>
    <dbReference type="NCBI Taxonomy" id="272568"/>
    <lineage>
        <taxon>Bacteria</taxon>
        <taxon>Pseudomonadati</taxon>
        <taxon>Pseudomonadota</taxon>
        <taxon>Alphaproteobacteria</taxon>
        <taxon>Acetobacterales</taxon>
        <taxon>Acetobacteraceae</taxon>
        <taxon>Gluconacetobacter</taxon>
    </lineage>
</organism>
<feature type="chain" id="PRO_1000074743" description="UDP-N-acetylmuramate--L-alanine ligase">
    <location>
        <begin position="1"/>
        <end position="480"/>
    </location>
</feature>
<feature type="binding site" evidence="1">
    <location>
        <begin position="115"/>
        <end position="121"/>
    </location>
    <ligand>
        <name>ATP</name>
        <dbReference type="ChEBI" id="CHEBI:30616"/>
    </ligand>
</feature>
<protein>
    <recommendedName>
        <fullName evidence="1">UDP-N-acetylmuramate--L-alanine ligase</fullName>
        <ecNumber evidence="1">6.3.2.8</ecNumber>
    </recommendedName>
    <alternativeName>
        <fullName evidence="1">UDP-N-acetylmuramoyl-L-alanine synthetase</fullName>
    </alternativeName>
</protein>
<keyword id="KW-0067">ATP-binding</keyword>
<keyword id="KW-0131">Cell cycle</keyword>
<keyword id="KW-0132">Cell division</keyword>
<keyword id="KW-0133">Cell shape</keyword>
<keyword id="KW-0961">Cell wall biogenesis/degradation</keyword>
<keyword id="KW-0963">Cytoplasm</keyword>
<keyword id="KW-0436">Ligase</keyword>
<keyword id="KW-0547">Nucleotide-binding</keyword>
<keyword id="KW-0573">Peptidoglycan synthesis</keyword>
<keyword id="KW-1185">Reference proteome</keyword>
<reference key="1">
    <citation type="journal article" date="2009" name="BMC Genomics">
        <title>Complete genome sequence of the sugarcane nitrogen-fixing endophyte Gluconacetobacter diazotrophicus Pal5.</title>
        <authorList>
            <person name="Bertalan M."/>
            <person name="Albano R."/>
            <person name="de Padua V."/>
            <person name="Rouws L."/>
            <person name="Rojas C."/>
            <person name="Hemerly A."/>
            <person name="Teixeira K."/>
            <person name="Schwab S."/>
            <person name="Araujo J."/>
            <person name="Oliveira A."/>
            <person name="Franca L."/>
            <person name="Magalhaes V."/>
            <person name="Alqueres S."/>
            <person name="Cardoso A."/>
            <person name="Almeida W."/>
            <person name="Loureiro M.M."/>
            <person name="Nogueira E."/>
            <person name="Cidade D."/>
            <person name="Oliveira D."/>
            <person name="Simao T."/>
            <person name="Macedo J."/>
            <person name="Valadao A."/>
            <person name="Dreschsel M."/>
            <person name="Freitas F."/>
            <person name="Vidal M."/>
            <person name="Guedes H."/>
            <person name="Rodrigues E."/>
            <person name="Meneses C."/>
            <person name="Brioso P."/>
            <person name="Pozzer L."/>
            <person name="Figueiredo D."/>
            <person name="Montano H."/>
            <person name="Junior J."/>
            <person name="de Souza Filho G."/>
            <person name="Martin Quintana Flores V."/>
            <person name="Ferreira B."/>
            <person name="Branco A."/>
            <person name="Gonzalez P."/>
            <person name="Guillobel H."/>
            <person name="Lemos M."/>
            <person name="Seibel L."/>
            <person name="Macedo J."/>
            <person name="Alves-Ferreira M."/>
            <person name="Sachetto-Martins G."/>
            <person name="Coelho A."/>
            <person name="Santos E."/>
            <person name="Amaral G."/>
            <person name="Neves A."/>
            <person name="Pacheco A.B."/>
            <person name="Carvalho D."/>
            <person name="Lery L."/>
            <person name="Bisch P."/>
            <person name="Rossle S.C."/>
            <person name="Urmenyi T."/>
            <person name="Rael Pereira A."/>
            <person name="Silva R."/>
            <person name="Rondinelli E."/>
            <person name="von Kruger W."/>
            <person name="Martins O."/>
            <person name="Baldani J.I."/>
            <person name="Ferreira P.C."/>
        </authorList>
    </citation>
    <scope>NUCLEOTIDE SEQUENCE [LARGE SCALE GENOMIC DNA]</scope>
    <source>
        <strain>ATCC 49037 / DSM 5601 / CCUG 37298 / CIP 103539 / LMG 7603 / PAl5</strain>
    </source>
</reference>
<reference key="2">
    <citation type="journal article" date="2010" name="Stand. Genomic Sci.">
        <title>Two genome sequences of the same bacterial strain, Gluconacetobacter diazotrophicus PAl 5, suggest a new standard in genome sequence submission.</title>
        <authorList>
            <person name="Giongo A."/>
            <person name="Tyler H.L."/>
            <person name="Zipperer U.N."/>
            <person name="Triplett E.W."/>
        </authorList>
    </citation>
    <scope>NUCLEOTIDE SEQUENCE [LARGE SCALE GENOMIC DNA]</scope>
    <source>
        <strain>ATCC 49037 / DSM 5601 / CCUG 37298 / CIP 103539 / LMG 7603 / PAl5</strain>
    </source>
</reference>